<evidence type="ECO:0000255" key="1">
    <source>
        <dbReference type="HAMAP-Rule" id="MF_00362"/>
    </source>
</evidence>
<evidence type="ECO:0000305" key="2"/>
<dbReference type="EMBL" id="BX950851">
    <property type="protein sequence ID" value="CAG73140.1"/>
    <property type="molecule type" value="Genomic_DNA"/>
</dbReference>
<dbReference type="RefSeq" id="WP_011091858.1">
    <property type="nucleotide sequence ID" value="NC_004547.2"/>
</dbReference>
<dbReference type="STRING" id="218491.ECA0221"/>
<dbReference type="GeneID" id="78547699"/>
<dbReference type="KEGG" id="eca:ECA0221"/>
<dbReference type="eggNOG" id="COG0244">
    <property type="taxonomic scope" value="Bacteria"/>
</dbReference>
<dbReference type="HOGENOM" id="CLU_092227_0_2_6"/>
<dbReference type="OrthoDB" id="9808307at2"/>
<dbReference type="Proteomes" id="UP000007966">
    <property type="component" value="Chromosome"/>
</dbReference>
<dbReference type="GO" id="GO:0015934">
    <property type="term" value="C:large ribosomal subunit"/>
    <property type="evidence" value="ECO:0007669"/>
    <property type="project" value="InterPro"/>
</dbReference>
<dbReference type="GO" id="GO:0070180">
    <property type="term" value="F:large ribosomal subunit rRNA binding"/>
    <property type="evidence" value="ECO:0007669"/>
    <property type="project" value="UniProtKB-UniRule"/>
</dbReference>
<dbReference type="GO" id="GO:0003735">
    <property type="term" value="F:structural constituent of ribosome"/>
    <property type="evidence" value="ECO:0007669"/>
    <property type="project" value="InterPro"/>
</dbReference>
<dbReference type="GO" id="GO:0006412">
    <property type="term" value="P:translation"/>
    <property type="evidence" value="ECO:0007669"/>
    <property type="project" value="UniProtKB-UniRule"/>
</dbReference>
<dbReference type="CDD" id="cd05797">
    <property type="entry name" value="Ribosomal_L10"/>
    <property type="match status" value="1"/>
</dbReference>
<dbReference type="FunFam" id="3.30.70.1730:FF:000001">
    <property type="entry name" value="50S ribosomal protein L10"/>
    <property type="match status" value="1"/>
</dbReference>
<dbReference type="Gene3D" id="3.30.70.1730">
    <property type="match status" value="1"/>
</dbReference>
<dbReference type="Gene3D" id="6.10.250.2350">
    <property type="match status" value="1"/>
</dbReference>
<dbReference type="HAMAP" id="MF_00362">
    <property type="entry name" value="Ribosomal_uL10"/>
    <property type="match status" value="1"/>
</dbReference>
<dbReference type="InterPro" id="IPR001790">
    <property type="entry name" value="Ribosomal_uL10"/>
</dbReference>
<dbReference type="InterPro" id="IPR043141">
    <property type="entry name" value="Ribosomal_uL10-like_sf"/>
</dbReference>
<dbReference type="InterPro" id="IPR022973">
    <property type="entry name" value="Ribosomal_uL10_bac"/>
</dbReference>
<dbReference type="InterPro" id="IPR047865">
    <property type="entry name" value="Ribosomal_uL10_bac_type"/>
</dbReference>
<dbReference type="InterPro" id="IPR002363">
    <property type="entry name" value="Ribosomal_uL10_CS_bac"/>
</dbReference>
<dbReference type="NCBIfam" id="NF000955">
    <property type="entry name" value="PRK00099.1-1"/>
    <property type="match status" value="1"/>
</dbReference>
<dbReference type="PANTHER" id="PTHR11560">
    <property type="entry name" value="39S RIBOSOMAL PROTEIN L10, MITOCHONDRIAL"/>
    <property type="match status" value="1"/>
</dbReference>
<dbReference type="Pfam" id="PF00466">
    <property type="entry name" value="Ribosomal_L10"/>
    <property type="match status" value="1"/>
</dbReference>
<dbReference type="SUPFAM" id="SSF160369">
    <property type="entry name" value="Ribosomal protein L10-like"/>
    <property type="match status" value="1"/>
</dbReference>
<dbReference type="PROSITE" id="PS01109">
    <property type="entry name" value="RIBOSOMAL_L10"/>
    <property type="match status" value="1"/>
</dbReference>
<accession>Q6DAN2</accession>
<proteinExistence type="inferred from homology"/>
<reference key="1">
    <citation type="journal article" date="2004" name="Proc. Natl. Acad. Sci. U.S.A.">
        <title>Genome sequence of the enterobacterial phytopathogen Erwinia carotovora subsp. atroseptica and characterization of virulence factors.</title>
        <authorList>
            <person name="Bell K.S."/>
            <person name="Sebaihia M."/>
            <person name="Pritchard L."/>
            <person name="Holden M.T.G."/>
            <person name="Hyman L.J."/>
            <person name="Holeva M.C."/>
            <person name="Thomson N.R."/>
            <person name="Bentley S.D."/>
            <person name="Churcher L.J.C."/>
            <person name="Mungall K."/>
            <person name="Atkin R."/>
            <person name="Bason N."/>
            <person name="Brooks K."/>
            <person name="Chillingworth T."/>
            <person name="Clark K."/>
            <person name="Doggett J."/>
            <person name="Fraser A."/>
            <person name="Hance Z."/>
            <person name="Hauser H."/>
            <person name="Jagels K."/>
            <person name="Moule S."/>
            <person name="Norbertczak H."/>
            <person name="Ormond D."/>
            <person name="Price C."/>
            <person name="Quail M.A."/>
            <person name="Sanders M."/>
            <person name="Walker D."/>
            <person name="Whitehead S."/>
            <person name="Salmond G.P.C."/>
            <person name="Birch P.R.J."/>
            <person name="Parkhill J."/>
            <person name="Toth I.K."/>
        </authorList>
    </citation>
    <scope>NUCLEOTIDE SEQUENCE [LARGE SCALE GENOMIC DNA]</scope>
    <source>
        <strain>SCRI 1043 / ATCC BAA-672</strain>
    </source>
</reference>
<gene>
    <name evidence="1" type="primary">rplJ</name>
    <name type="ordered locus">ECA0221</name>
</gene>
<keyword id="KW-1185">Reference proteome</keyword>
<keyword id="KW-0687">Ribonucleoprotein</keyword>
<keyword id="KW-0689">Ribosomal protein</keyword>
<keyword id="KW-0694">RNA-binding</keyword>
<keyword id="KW-0699">rRNA-binding</keyword>
<name>RL10_PECAS</name>
<protein>
    <recommendedName>
        <fullName evidence="1">Large ribosomal subunit protein uL10</fullName>
    </recommendedName>
    <alternativeName>
        <fullName evidence="2">50S ribosomal protein L10</fullName>
    </alternativeName>
</protein>
<sequence length="165" mass="17771">MALNLQDKQAIVAEVSEVAKGALSAVVADSRGVTVDKMTELRKAGREAGVYMRVVRNTLLRRVVEGTQFECLKDTFVGPTLIAYSMEHPGAAARLFKDFAKANAKFEVKAAAFEGELIPAAQIDRLATLPTYEEALARLMSTMKEAAAGKLVRTLAAVRDAKEAA</sequence>
<comment type="function">
    <text evidence="1">Forms part of the ribosomal stalk, playing a central role in the interaction of the ribosome with GTP-bound translation factors.</text>
</comment>
<comment type="subunit">
    <text evidence="1">Part of the ribosomal stalk of the 50S ribosomal subunit. The N-terminus interacts with L11 and the large rRNA to form the base of the stalk. The C-terminus forms an elongated spine to which L12 dimers bind in a sequential fashion forming a multimeric L10(L12)X complex.</text>
</comment>
<comment type="similarity">
    <text evidence="1">Belongs to the universal ribosomal protein uL10 family.</text>
</comment>
<feature type="chain" id="PRO_0000154632" description="Large ribosomal subunit protein uL10">
    <location>
        <begin position="1"/>
        <end position="165"/>
    </location>
</feature>
<organism>
    <name type="scientific">Pectobacterium atrosepticum (strain SCRI 1043 / ATCC BAA-672)</name>
    <name type="common">Erwinia carotovora subsp. atroseptica</name>
    <dbReference type="NCBI Taxonomy" id="218491"/>
    <lineage>
        <taxon>Bacteria</taxon>
        <taxon>Pseudomonadati</taxon>
        <taxon>Pseudomonadota</taxon>
        <taxon>Gammaproteobacteria</taxon>
        <taxon>Enterobacterales</taxon>
        <taxon>Pectobacteriaceae</taxon>
        <taxon>Pectobacterium</taxon>
    </lineage>
</organism>